<evidence type="ECO:0000255" key="1">
    <source>
        <dbReference type="HAMAP-Rule" id="MF_00120"/>
    </source>
</evidence>
<accession>A0R921</accession>
<feature type="chain" id="PRO_1000015799" description="Glutamyl-tRNA(Gln) amidotransferase subunit A">
    <location>
        <begin position="1"/>
        <end position="485"/>
    </location>
</feature>
<feature type="active site" description="Charge relay system" evidence="1">
    <location>
        <position position="78"/>
    </location>
</feature>
<feature type="active site" description="Charge relay system" evidence="1">
    <location>
        <position position="153"/>
    </location>
</feature>
<feature type="active site" description="Acyl-ester intermediate" evidence="1">
    <location>
        <position position="177"/>
    </location>
</feature>
<keyword id="KW-0067">ATP-binding</keyword>
<keyword id="KW-0436">Ligase</keyword>
<keyword id="KW-0547">Nucleotide-binding</keyword>
<keyword id="KW-0648">Protein biosynthesis</keyword>
<reference key="1">
    <citation type="journal article" date="2007" name="J. Bacteriol.">
        <title>The complete genome sequence of Bacillus thuringiensis Al Hakam.</title>
        <authorList>
            <person name="Challacombe J.F."/>
            <person name="Altherr M.R."/>
            <person name="Xie G."/>
            <person name="Bhotika S.S."/>
            <person name="Brown N."/>
            <person name="Bruce D."/>
            <person name="Campbell C.S."/>
            <person name="Campbell M.L."/>
            <person name="Chen J."/>
            <person name="Chertkov O."/>
            <person name="Cleland C."/>
            <person name="Dimitrijevic M."/>
            <person name="Doggett N.A."/>
            <person name="Fawcett J.J."/>
            <person name="Glavina T."/>
            <person name="Goodwin L.A."/>
            <person name="Green L.D."/>
            <person name="Han C.S."/>
            <person name="Hill K.K."/>
            <person name="Hitchcock P."/>
            <person name="Jackson P.J."/>
            <person name="Keim P."/>
            <person name="Kewalramani A.R."/>
            <person name="Longmire J."/>
            <person name="Lucas S."/>
            <person name="Malfatti S."/>
            <person name="Martinez D."/>
            <person name="McMurry K."/>
            <person name="Meincke L.J."/>
            <person name="Misra M."/>
            <person name="Moseman B.L."/>
            <person name="Mundt M."/>
            <person name="Munk A.C."/>
            <person name="Okinaka R.T."/>
            <person name="Parson-Quintana B."/>
            <person name="Reilly L.P."/>
            <person name="Richardson P."/>
            <person name="Robinson D.L."/>
            <person name="Saunders E."/>
            <person name="Tapia R."/>
            <person name="Tesmer J.G."/>
            <person name="Thayer N."/>
            <person name="Thompson L.S."/>
            <person name="Tice H."/>
            <person name="Ticknor L.O."/>
            <person name="Wills P.L."/>
            <person name="Gilna P."/>
            <person name="Brettin T.S."/>
        </authorList>
    </citation>
    <scope>NUCLEOTIDE SEQUENCE [LARGE SCALE GENOMIC DNA]</scope>
    <source>
        <strain>Al Hakam</strain>
    </source>
</reference>
<sequence>MSLFDHSVSELHKKLNNKEISVTDLVEESYKRIADVEDNVKAFLTLDEENARAKAKELDAKIGAEDNGLLFGMPIGVKDNIVTNGLRTTCASKILANFDPIYDATVVQKLKAADTITIGKLNMDEFAMGSSNENSGFYATKNPWNLDYVPGGSSGGSAAAVAAGEVLFSLGSDTGGSIRQPAAYCGVVGLKPTYGRVSRYGLVAFASSLDQIGPITRTVEDNAYLLQAISGLDRMDATSANVEVGNYLAGLTGDVKGLRIAVPKEYLGEGVGEEARESVLAALKVLEGMGATWEEVSLPHSKYALATYYLLSSSEASANLSRFDGVRYGVRSDNVNNLLDLYKNTRSEGFGDEVKRRIMLGTFALSSGYYDAYYKKAQQVRTLIKNDFENVFANYDVIIGPTTPTPAFKVGEKVDDPMTMYANDILTIPVNLAGVPAISVPCGFGANNMPLGLQIIGKHFDEATIYRVAHAFEQATDYHTKKASL</sequence>
<comment type="function">
    <text evidence="1">Allows the formation of correctly charged Gln-tRNA(Gln) through the transamidation of misacylated Glu-tRNA(Gln) in organisms which lack glutaminyl-tRNA synthetase. The reaction takes place in the presence of glutamine and ATP through an activated gamma-phospho-Glu-tRNA(Gln).</text>
</comment>
<comment type="catalytic activity">
    <reaction evidence="1">
        <text>L-glutamyl-tRNA(Gln) + L-glutamine + ATP + H2O = L-glutaminyl-tRNA(Gln) + L-glutamate + ADP + phosphate + H(+)</text>
        <dbReference type="Rhea" id="RHEA:17521"/>
        <dbReference type="Rhea" id="RHEA-COMP:9681"/>
        <dbReference type="Rhea" id="RHEA-COMP:9684"/>
        <dbReference type="ChEBI" id="CHEBI:15377"/>
        <dbReference type="ChEBI" id="CHEBI:15378"/>
        <dbReference type="ChEBI" id="CHEBI:29985"/>
        <dbReference type="ChEBI" id="CHEBI:30616"/>
        <dbReference type="ChEBI" id="CHEBI:43474"/>
        <dbReference type="ChEBI" id="CHEBI:58359"/>
        <dbReference type="ChEBI" id="CHEBI:78520"/>
        <dbReference type="ChEBI" id="CHEBI:78521"/>
        <dbReference type="ChEBI" id="CHEBI:456216"/>
        <dbReference type="EC" id="6.3.5.7"/>
    </reaction>
</comment>
<comment type="subunit">
    <text evidence="1">Heterotrimer of A, B and C subunits.</text>
</comment>
<comment type="similarity">
    <text evidence="1">Belongs to the amidase family. GatA subfamily.</text>
</comment>
<protein>
    <recommendedName>
        <fullName evidence="1">Glutamyl-tRNA(Gln) amidotransferase subunit A</fullName>
        <shortName evidence="1">Glu-ADT subunit A</shortName>
        <ecNumber evidence="1">6.3.5.7</ecNumber>
    </recommendedName>
</protein>
<name>GATA_BACAH</name>
<gene>
    <name evidence="1" type="primary">gatA</name>
    <name type="ordered locus">BALH_0313</name>
</gene>
<proteinExistence type="inferred from homology"/>
<organism>
    <name type="scientific">Bacillus thuringiensis (strain Al Hakam)</name>
    <dbReference type="NCBI Taxonomy" id="412694"/>
    <lineage>
        <taxon>Bacteria</taxon>
        <taxon>Bacillati</taxon>
        <taxon>Bacillota</taxon>
        <taxon>Bacilli</taxon>
        <taxon>Bacillales</taxon>
        <taxon>Bacillaceae</taxon>
        <taxon>Bacillus</taxon>
        <taxon>Bacillus cereus group</taxon>
    </lineage>
</organism>
<dbReference type="EC" id="6.3.5.7" evidence="1"/>
<dbReference type="EMBL" id="CP000485">
    <property type="protein sequence ID" value="ABK83714.1"/>
    <property type="molecule type" value="Genomic_DNA"/>
</dbReference>
<dbReference type="RefSeq" id="WP_000051434.1">
    <property type="nucleotide sequence ID" value="NC_008600.1"/>
</dbReference>
<dbReference type="SMR" id="A0R921"/>
<dbReference type="KEGG" id="btl:BALH_0313"/>
<dbReference type="HOGENOM" id="CLU_009600_0_3_9"/>
<dbReference type="GO" id="GO:0030956">
    <property type="term" value="C:glutamyl-tRNA(Gln) amidotransferase complex"/>
    <property type="evidence" value="ECO:0007669"/>
    <property type="project" value="InterPro"/>
</dbReference>
<dbReference type="GO" id="GO:0005524">
    <property type="term" value="F:ATP binding"/>
    <property type="evidence" value="ECO:0007669"/>
    <property type="project" value="UniProtKB-KW"/>
</dbReference>
<dbReference type="GO" id="GO:0050567">
    <property type="term" value="F:glutaminyl-tRNA synthase (glutamine-hydrolyzing) activity"/>
    <property type="evidence" value="ECO:0007669"/>
    <property type="project" value="UniProtKB-UniRule"/>
</dbReference>
<dbReference type="GO" id="GO:0006412">
    <property type="term" value="P:translation"/>
    <property type="evidence" value="ECO:0007669"/>
    <property type="project" value="UniProtKB-UniRule"/>
</dbReference>
<dbReference type="Gene3D" id="3.90.1300.10">
    <property type="entry name" value="Amidase signature (AS) domain"/>
    <property type="match status" value="1"/>
</dbReference>
<dbReference type="HAMAP" id="MF_00120">
    <property type="entry name" value="GatA"/>
    <property type="match status" value="1"/>
</dbReference>
<dbReference type="InterPro" id="IPR000120">
    <property type="entry name" value="Amidase"/>
</dbReference>
<dbReference type="InterPro" id="IPR020556">
    <property type="entry name" value="Amidase_CS"/>
</dbReference>
<dbReference type="InterPro" id="IPR023631">
    <property type="entry name" value="Amidase_dom"/>
</dbReference>
<dbReference type="InterPro" id="IPR036928">
    <property type="entry name" value="AS_sf"/>
</dbReference>
<dbReference type="InterPro" id="IPR004412">
    <property type="entry name" value="GatA"/>
</dbReference>
<dbReference type="NCBIfam" id="TIGR00132">
    <property type="entry name" value="gatA"/>
    <property type="match status" value="1"/>
</dbReference>
<dbReference type="PANTHER" id="PTHR11895:SF151">
    <property type="entry name" value="GLUTAMYL-TRNA(GLN) AMIDOTRANSFERASE SUBUNIT A"/>
    <property type="match status" value="1"/>
</dbReference>
<dbReference type="PANTHER" id="PTHR11895">
    <property type="entry name" value="TRANSAMIDASE"/>
    <property type="match status" value="1"/>
</dbReference>
<dbReference type="Pfam" id="PF01425">
    <property type="entry name" value="Amidase"/>
    <property type="match status" value="1"/>
</dbReference>
<dbReference type="SUPFAM" id="SSF75304">
    <property type="entry name" value="Amidase signature (AS) enzymes"/>
    <property type="match status" value="1"/>
</dbReference>
<dbReference type="PROSITE" id="PS00571">
    <property type="entry name" value="AMIDASES"/>
    <property type="match status" value="1"/>
</dbReference>